<comment type="function">
    <text evidence="4">Removal of H(2)O(2), oxidation of toxic reductants, biosynthesis and degradation of lignin, suberization, auxin catabolism, response to environmental stresses such as wounding, pathogen attack and oxidative stress. These functions might be dependent on each isozyme/isoform in each plant tissue.</text>
</comment>
<comment type="catalytic activity">
    <reaction>
        <text>2 a phenolic donor + H2O2 = 2 a phenolic radical donor + 2 H2O</text>
        <dbReference type="Rhea" id="RHEA:56136"/>
        <dbReference type="ChEBI" id="CHEBI:15377"/>
        <dbReference type="ChEBI" id="CHEBI:16240"/>
        <dbReference type="ChEBI" id="CHEBI:139520"/>
        <dbReference type="ChEBI" id="CHEBI:139521"/>
        <dbReference type="EC" id="1.11.1.7"/>
    </reaction>
</comment>
<comment type="cofactor">
    <cofactor evidence="1 3">
        <name>Ca(2+)</name>
        <dbReference type="ChEBI" id="CHEBI:29108"/>
    </cofactor>
    <text evidence="1 3">Binds 2 calcium ions per subunit.</text>
</comment>
<comment type="cofactor">
    <cofactor evidence="1 3">
        <name>heme b</name>
        <dbReference type="ChEBI" id="CHEBI:60344"/>
    </cofactor>
    <text evidence="1 3">Binds 1 heme b (iron(II)-protoporphyrin IX) group per subunit.</text>
</comment>
<comment type="subcellular location">
    <subcellularLocation>
        <location evidence="2 3">Secreted</location>
    </subcellularLocation>
</comment>
<comment type="similarity">
    <text evidence="3">Belongs to the peroxidase family. Classical plant (class III) peroxidase subfamily.</text>
</comment>
<name>PER5_BETPN</name>
<proteinExistence type="evidence at protein level"/>
<protein>
    <recommendedName>
        <fullName>Peroxidase 5</fullName>
        <ecNumber>1.11.1.7</ecNumber>
    </recommendedName>
</protein>
<dbReference type="EC" id="1.11.1.7"/>
<dbReference type="GO" id="GO:0005576">
    <property type="term" value="C:extracellular region"/>
    <property type="evidence" value="ECO:0007669"/>
    <property type="project" value="UniProtKB-SubCell"/>
</dbReference>
<dbReference type="GO" id="GO:0140825">
    <property type="term" value="F:lactoperoxidase activity"/>
    <property type="evidence" value="ECO:0007669"/>
    <property type="project" value="UniProtKB-EC"/>
</dbReference>
<dbReference type="GO" id="GO:0046872">
    <property type="term" value="F:metal ion binding"/>
    <property type="evidence" value="ECO:0007669"/>
    <property type="project" value="UniProtKB-KW"/>
</dbReference>
<dbReference type="GO" id="GO:0042744">
    <property type="term" value="P:hydrogen peroxide catabolic process"/>
    <property type="evidence" value="ECO:0007669"/>
    <property type="project" value="UniProtKB-KW"/>
</dbReference>
<sequence length="14" mass="1384">VALGGCLPTVQLGR</sequence>
<evidence type="ECO:0000250" key="1">
    <source>
        <dbReference type="UniProtKB" id="P22195"/>
    </source>
</evidence>
<evidence type="ECO:0000250" key="2">
    <source>
        <dbReference type="UniProtKB" id="P84516"/>
    </source>
</evidence>
<evidence type="ECO:0000255" key="3">
    <source>
        <dbReference type="PROSITE-ProRule" id="PRU00297"/>
    </source>
</evidence>
<evidence type="ECO:0000305" key="4"/>
<organism>
    <name type="scientific">Betula pendula</name>
    <name type="common">European white birch</name>
    <name type="synonym">Betula verrucosa</name>
    <dbReference type="NCBI Taxonomy" id="3505"/>
    <lineage>
        <taxon>Eukaryota</taxon>
        <taxon>Viridiplantae</taxon>
        <taxon>Streptophyta</taxon>
        <taxon>Embryophyta</taxon>
        <taxon>Tracheophyta</taxon>
        <taxon>Spermatophyta</taxon>
        <taxon>Magnoliopsida</taxon>
        <taxon>eudicotyledons</taxon>
        <taxon>Gunneridae</taxon>
        <taxon>Pentapetalae</taxon>
        <taxon>rosids</taxon>
        <taxon>fabids</taxon>
        <taxon>Fagales</taxon>
        <taxon>Betulaceae</taxon>
        <taxon>Betula</taxon>
    </lineage>
</organism>
<keyword id="KW-0106">Calcium</keyword>
<keyword id="KW-0903">Direct protein sequencing</keyword>
<keyword id="KW-0349">Heme</keyword>
<keyword id="KW-0376">Hydrogen peroxide</keyword>
<keyword id="KW-0408">Iron</keyword>
<keyword id="KW-0479">Metal-binding</keyword>
<keyword id="KW-0560">Oxidoreductase</keyword>
<keyword id="KW-0575">Peroxidase</keyword>
<keyword id="KW-0964">Secreted</keyword>
<feature type="chain" id="PRO_0000315924" description="Peroxidase 5">
    <location>
        <begin position="1" status="less than"/>
        <end position="14" status="greater than"/>
    </location>
</feature>
<feature type="unsure residue" description="L or I">
    <location>
        <position position="3"/>
    </location>
</feature>
<feature type="unsure residue" description="L or I">
    <location>
        <position position="7"/>
    </location>
</feature>
<feature type="unsure residue" description="Q or K">
    <location>
        <position position="11"/>
    </location>
</feature>
<feature type="unsure residue" description="L or I">
    <location>
        <position position="12"/>
    </location>
</feature>
<feature type="non-terminal residue">
    <location>
        <position position="1"/>
    </location>
</feature>
<feature type="non-terminal residue">
    <location>
        <position position="14"/>
    </location>
</feature>
<reference key="1">
    <citation type="journal article" date="2009" name="Physiol. Plantarum">
        <title>The presence of sinapyl lignin in Ginkgo biloba cell cultures changes our views of the evolution of lignin biosynthesis.</title>
        <authorList>
            <person name="Novo Uzal E."/>
            <person name="Gomez Ros L.V."/>
            <person name="Pomar F."/>
            <person name="Bernal M.A."/>
            <person name="Paradela A."/>
            <person name="Albar J.P."/>
            <person name="Ros Barcelo A."/>
        </authorList>
    </citation>
    <scope>PROTEIN SEQUENCE</scope>
    <source>
        <strain>PC-1121</strain>
        <tissue>Callus</tissue>
    </source>
</reference>
<accession>P85351</accession>